<comment type="function">
    <text evidence="1">Involved in pre-mRNA splicing.</text>
</comment>
<comment type="subunit">
    <text evidence="1">Associated with the spliceosome.</text>
</comment>
<comment type="subcellular location">
    <subcellularLocation>
        <location evidence="1">Nucleus</location>
    </subcellularLocation>
</comment>
<comment type="similarity">
    <text evidence="4">Belongs to the SYF2 family.</text>
</comment>
<gene>
    <name type="primary">SYF2</name>
    <name type="ordered locus">YALI0B03036g</name>
</gene>
<protein>
    <recommendedName>
        <fullName>Pre-mRNA-splicing factor SYF2</fullName>
    </recommendedName>
</protein>
<sequence>MNDSSTSNRKALFEEDKDLKVNKRADALLERKQQEAEFELEKLQAEERGEDFDRKRAWDWTVKETEEWKEKKERKRERESQSGVHDMSSTAQRAYEKDLASFKPDLETYEKEKETGLHHTPSFNHKPTPEALDRLVNGLTKGDKQRMKRRKQAGADDQHATYISDKNKQFNEKLNRQYDKYTKEIRDNFERGTAL</sequence>
<proteinExistence type="inferred from homology"/>
<organism>
    <name type="scientific">Yarrowia lipolytica (strain CLIB 122 / E 150)</name>
    <name type="common">Yeast</name>
    <name type="synonym">Candida lipolytica</name>
    <dbReference type="NCBI Taxonomy" id="284591"/>
    <lineage>
        <taxon>Eukaryota</taxon>
        <taxon>Fungi</taxon>
        <taxon>Dikarya</taxon>
        <taxon>Ascomycota</taxon>
        <taxon>Saccharomycotina</taxon>
        <taxon>Dipodascomycetes</taxon>
        <taxon>Dipodascales</taxon>
        <taxon>Dipodascales incertae sedis</taxon>
        <taxon>Yarrowia</taxon>
    </lineage>
</organism>
<accession>Q6CFW4</accession>
<keyword id="KW-0175">Coiled coil</keyword>
<keyword id="KW-0507">mRNA processing</keyword>
<keyword id="KW-0508">mRNA splicing</keyword>
<keyword id="KW-0539">Nucleus</keyword>
<keyword id="KW-1185">Reference proteome</keyword>
<keyword id="KW-0747">Spliceosome</keyword>
<evidence type="ECO:0000250" key="1"/>
<evidence type="ECO:0000255" key="2"/>
<evidence type="ECO:0000256" key="3">
    <source>
        <dbReference type="SAM" id="MobiDB-lite"/>
    </source>
</evidence>
<evidence type="ECO:0000305" key="4"/>
<reference key="1">
    <citation type="journal article" date="2004" name="Nature">
        <title>Genome evolution in yeasts.</title>
        <authorList>
            <person name="Dujon B."/>
            <person name="Sherman D."/>
            <person name="Fischer G."/>
            <person name="Durrens P."/>
            <person name="Casaregola S."/>
            <person name="Lafontaine I."/>
            <person name="de Montigny J."/>
            <person name="Marck C."/>
            <person name="Neuveglise C."/>
            <person name="Talla E."/>
            <person name="Goffard N."/>
            <person name="Frangeul L."/>
            <person name="Aigle M."/>
            <person name="Anthouard V."/>
            <person name="Babour A."/>
            <person name="Barbe V."/>
            <person name="Barnay S."/>
            <person name="Blanchin S."/>
            <person name="Beckerich J.-M."/>
            <person name="Beyne E."/>
            <person name="Bleykasten C."/>
            <person name="Boisrame A."/>
            <person name="Boyer J."/>
            <person name="Cattolico L."/>
            <person name="Confanioleri F."/>
            <person name="de Daruvar A."/>
            <person name="Despons L."/>
            <person name="Fabre E."/>
            <person name="Fairhead C."/>
            <person name="Ferry-Dumazet H."/>
            <person name="Groppi A."/>
            <person name="Hantraye F."/>
            <person name="Hennequin C."/>
            <person name="Jauniaux N."/>
            <person name="Joyet P."/>
            <person name="Kachouri R."/>
            <person name="Kerrest A."/>
            <person name="Koszul R."/>
            <person name="Lemaire M."/>
            <person name="Lesur I."/>
            <person name="Ma L."/>
            <person name="Muller H."/>
            <person name="Nicaud J.-M."/>
            <person name="Nikolski M."/>
            <person name="Oztas S."/>
            <person name="Ozier-Kalogeropoulos O."/>
            <person name="Pellenz S."/>
            <person name="Potier S."/>
            <person name="Richard G.-F."/>
            <person name="Straub M.-L."/>
            <person name="Suleau A."/>
            <person name="Swennen D."/>
            <person name="Tekaia F."/>
            <person name="Wesolowski-Louvel M."/>
            <person name="Westhof E."/>
            <person name="Wirth B."/>
            <person name="Zeniou-Meyer M."/>
            <person name="Zivanovic Y."/>
            <person name="Bolotin-Fukuhara M."/>
            <person name="Thierry A."/>
            <person name="Bouchier C."/>
            <person name="Caudron B."/>
            <person name="Scarpelli C."/>
            <person name="Gaillardin C."/>
            <person name="Weissenbach J."/>
            <person name="Wincker P."/>
            <person name="Souciet J.-L."/>
        </authorList>
    </citation>
    <scope>NUCLEOTIDE SEQUENCE [LARGE SCALE GENOMIC DNA]</scope>
    <source>
        <strain>CLIB 122 / E 150</strain>
    </source>
</reference>
<name>SYF2_YARLI</name>
<feature type="chain" id="PRO_0000072380" description="Pre-mRNA-splicing factor SYF2">
    <location>
        <begin position="1"/>
        <end position="195"/>
    </location>
</feature>
<feature type="region of interest" description="Disordered" evidence="3">
    <location>
        <begin position="66"/>
        <end position="164"/>
    </location>
</feature>
<feature type="coiled-coil region" evidence="2">
    <location>
        <begin position="22"/>
        <end position="50"/>
    </location>
</feature>
<feature type="compositionally biased region" description="Basic and acidic residues" evidence="3">
    <location>
        <begin position="66"/>
        <end position="80"/>
    </location>
</feature>
<feature type="compositionally biased region" description="Polar residues" evidence="3">
    <location>
        <begin position="81"/>
        <end position="92"/>
    </location>
</feature>
<feature type="compositionally biased region" description="Basic and acidic residues" evidence="3">
    <location>
        <begin position="94"/>
        <end position="117"/>
    </location>
</feature>
<feature type="compositionally biased region" description="Basic and acidic residues" evidence="3">
    <location>
        <begin position="153"/>
        <end position="164"/>
    </location>
</feature>
<dbReference type="EMBL" id="CR382128">
    <property type="protein sequence ID" value="CAG82668.1"/>
    <property type="molecule type" value="Genomic_DNA"/>
</dbReference>
<dbReference type="RefSeq" id="XP_500448.1">
    <property type="nucleotide sequence ID" value="XM_500448.1"/>
</dbReference>
<dbReference type="SMR" id="Q6CFW4"/>
<dbReference type="FunCoup" id="Q6CFW4">
    <property type="interactions" value="142"/>
</dbReference>
<dbReference type="STRING" id="284591.Q6CFW4"/>
<dbReference type="EnsemblFungi" id="CAG82668">
    <property type="protein sequence ID" value="CAG82668"/>
    <property type="gene ID" value="YALI0_B03036g"/>
</dbReference>
<dbReference type="KEGG" id="yli:2906953"/>
<dbReference type="VEuPathDB" id="FungiDB:YALI0_B03036g"/>
<dbReference type="HOGENOM" id="CLU_051065_2_1_1"/>
<dbReference type="InParanoid" id="Q6CFW4"/>
<dbReference type="OMA" id="AYSHDHK"/>
<dbReference type="OrthoDB" id="106154at4891"/>
<dbReference type="Proteomes" id="UP000001300">
    <property type="component" value="Chromosome B"/>
</dbReference>
<dbReference type="GO" id="GO:0071013">
    <property type="term" value="C:catalytic step 2 spliceosome"/>
    <property type="evidence" value="ECO:0000318"/>
    <property type="project" value="GO_Central"/>
</dbReference>
<dbReference type="GO" id="GO:0071014">
    <property type="term" value="C:post-mRNA release spliceosomal complex"/>
    <property type="evidence" value="ECO:0000318"/>
    <property type="project" value="GO_Central"/>
</dbReference>
<dbReference type="GO" id="GO:0000974">
    <property type="term" value="C:Prp19 complex"/>
    <property type="evidence" value="ECO:0000318"/>
    <property type="project" value="GO_Central"/>
</dbReference>
<dbReference type="GO" id="GO:0006397">
    <property type="term" value="P:mRNA processing"/>
    <property type="evidence" value="ECO:0007669"/>
    <property type="project" value="UniProtKB-KW"/>
</dbReference>
<dbReference type="GO" id="GO:0008380">
    <property type="term" value="P:RNA splicing"/>
    <property type="evidence" value="ECO:0007669"/>
    <property type="project" value="UniProtKB-KW"/>
</dbReference>
<dbReference type="InterPro" id="IPR013260">
    <property type="entry name" value="mRNA_splic_SYF2"/>
</dbReference>
<dbReference type="PANTHER" id="PTHR13264">
    <property type="entry name" value="GCIP-INTERACTING PROTEIN P29"/>
    <property type="match status" value="1"/>
</dbReference>
<dbReference type="PANTHER" id="PTHR13264:SF5">
    <property type="entry name" value="PRE-MRNA-SPLICING FACTOR SYF2"/>
    <property type="match status" value="1"/>
</dbReference>
<dbReference type="Pfam" id="PF08231">
    <property type="entry name" value="SYF2"/>
    <property type="match status" value="1"/>
</dbReference>